<protein>
    <recommendedName>
        <fullName evidence="1">Ribonuclease Z</fullName>
        <shortName evidence="1">RNase Z</shortName>
        <ecNumber evidence="1">3.1.26.11</ecNumber>
    </recommendedName>
    <alternativeName>
        <fullName evidence="1">tRNA 3 endonuclease</fullName>
    </alternativeName>
    <alternativeName>
        <fullName evidence="1">tRNase Z</fullName>
    </alternativeName>
</protein>
<feature type="chain" id="PRO_1000216018" description="Ribonuclease Z">
    <location>
        <begin position="1"/>
        <end position="291"/>
    </location>
</feature>
<feature type="active site" description="Proton acceptor" evidence="1">
    <location>
        <position position="65"/>
    </location>
</feature>
<feature type="binding site" evidence="1">
    <location>
        <position position="61"/>
    </location>
    <ligand>
        <name>Zn(2+)</name>
        <dbReference type="ChEBI" id="CHEBI:29105"/>
        <label>1</label>
        <note>catalytic</note>
    </ligand>
</feature>
<feature type="binding site" evidence="1">
    <location>
        <position position="63"/>
    </location>
    <ligand>
        <name>Zn(2+)</name>
        <dbReference type="ChEBI" id="CHEBI:29105"/>
        <label>1</label>
        <note>catalytic</note>
    </ligand>
</feature>
<feature type="binding site" evidence="1">
    <location>
        <position position="65"/>
    </location>
    <ligand>
        <name>Zn(2+)</name>
        <dbReference type="ChEBI" id="CHEBI:29105"/>
        <label>2</label>
        <note>catalytic</note>
    </ligand>
</feature>
<feature type="binding site" evidence="1">
    <location>
        <position position="66"/>
    </location>
    <ligand>
        <name>Zn(2+)</name>
        <dbReference type="ChEBI" id="CHEBI:29105"/>
        <label>2</label>
        <note>catalytic</note>
    </ligand>
</feature>
<feature type="binding site" evidence="1">
    <location>
        <position position="133"/>
    </location>
    <ligand>
        <name>Zn(2+)</name>
        <dbReference type="ChEBI" id="CHEBI:29105"/>
        <label>1</label>
        <note>catalytic</note>
    </ligand>
</feature>
<feature type="binding site" evidence="1">
    <location>
        <position position="201"/>
    </location>
    <ligand>
        <name>Zn(2+)</name>
        <dbReference type="ChEBI" id="CHEBI:29105"/>
        <label>1</label>
        <note>catalytic</note>
    </ligand>
</feature>
<feature type="binding site" evidence="1">
    <location>
        <position position="201"/>
    </location>
    <ligand>
        <name>Zn(2+)</name>
        <dbReference type="ChEBI" id="CHEBI:29105"/>
        <label>2</label>
        <note>catalytic</note>
    </ligand>
</feature>
<feature type="binding site" evidence="1">
    <location>
        <position position="257"/>
    </location>
    <ligand>
        <name>Zn(2+)</name>
        <dbReference type="ChEBI" id="CHEBI:29105"/>
        <label>2</label>
        <note>catalytic</note>
    </ligand>
</feature>
<reference key="1">
    <citation type="journal article" date="2009" name="Proc. Natl. Acad. Sci. U.S.A.">
        <title>Biogeography of the Sulfolobus islandicus pan-genome.</title>
        <authorList>
            <person name="Reno M.L."/>
            <person name="Held N.L."/>
            <person name="Fields C.J."/>
            <person name="Burke P.V."/>
            <person name="Whitaker R.J."/>
        </authorList>
    </citation>
    <scope>NUCLEOTIDE SEQUENCE [LARGE SCALE GENOMIC DNA]</scope>
    <source>
        <strain>Y.N.15.51 / Yellowstone #2</strain>
    </source>
</reference>
<evidence type="ECO:0000255" key="1">
    <source>
        <dbReference type="HAMAP-Rule" id="MF_01818"/>
    </source>
</evidence>
<organism>
    <name type="scientific">Saccharolobus islandicus (strain Y.N.15.51 / Yellowstone #2)</name>
    <name type="common">Sulfolobus islandicus</name>
    <dbReference type="NCBI Taxonomy" id="419942"/>
    <lineage>
        <taxon>Archaea</taxon>
        <taxon>Thermoproteota</taxon>
        <taxon>Thermoprotei</taxon>
        <taxon>Sulfolobales</taxon>
        <taxon>Sulfolobaceae</taxon>
        <taxon>Saccharolobus</taxon>
    </lineage>
</organism>
<accession>C3NHZ9</accession>
<name>RNZ_SACI1</name>
<proteinExistence type="inferred from homology"/>
<dbReference type="EC" id="3.1.26.11" evidence="1"/>
<dbReference type="EMBL" id="CP001404">
    <property type="protein sequence ID" value="ACP48759.1"/>
    <property type="molecule type" value="Genomic_DNA"/>
</dbReference>
<dbReference type="RefSeq" id="WP_012716098.1">
    <property type="nucleotide sequence ID" value="NC_012623.1"/>
</dbReference>
<dbReference type="SMR" id="C3NHZ9"/>
<dbReference type="GeneID" id="7810635"/>
<dbReference type="KEGG" id="sin:YN1551_1677"/>
<dbReference type="HOGENOM" id="CLU_031317_2_1_2"/>
<dbReference type="Proteomes" id="UP000006818">
    <property type="component" value="Chromosome"/>
</dbReference>
<dbReference type="GO" id="GO:0042781">
    <property type="term" value="F:3'-tRNA processing endoribonuclease activity"/>
    <property type="evidence" value="ECO:0007669"/>
    <property type="project" value="UniProtKB-UniRule"/>
</dbReference>
<dbReference type="GO" id="GO:0008270">
    <property type="term" value="F:zinc ion binding"/>
    <property type="evidence" value="ECO:0007669"/>
    <property type="project" value="UniProtKB-UniRule"/>
</dbReference>
<dbReference type="CDD" id="cd07717">
    <property type="entry name" value="RNaseZ_ZiPD-like_MBL-fold"/>
    <property type="match status" value="1"/>
</dbReference>
<dbReference type="FunFam" id="3.60.15.10:FF:000075">
    <property type="entry name" value="Ribonuclease Z"/>
    <property type="match status" value="1"/>
</dbReference>
<dbReference type="Gene3D" id="3.60.15.10">
    <property type="entry name" value="Ribonuclease Z/Hydroxyacylglutathione hydrolase-like"/>
    <property type="match status" value="1"/>
</dbReference>
<dbReference type="HAMAP" id="MF_01818">
    <property type="entry name" value="RNase_Z_BN"/>
    <property type="match status" value="1"/>
</dbReference>
<dbReference type="InterPro" id="IPR001279">
    <property type="entry name" value="Metallo-B-lactamas"/>
</dbReference>
<dbReference type="InterPro" id="IPR036866">
    <property type="entry name" value="RibonucZ/Hydroxyglut_hydro"/>
</dbReference>
<dbReference type="InterPro" id="IPR013471">
    <property type="entry name" value="RNase_Z/BN"/>
</dbReference>
<dbReference type="NCBIfam" id="NF000801">
    <property type="entry name" value="PRK00055.1-3"/>
    <property type="match status" value="1"/>
</dbReference>
<dbReference type="NCBIfam" id="TIGR02651">
    <property type="entry name" value="RNase_Z"/>
    <property type="match status" value="1"/>
</dbReference>
<dbReference type="PANTHER" id="PTHR46018">
    <property type="entry name" value="ZINC PHOSPHODIESTERASE ELAC PROTEIN 1"/>
    <property type="match status" value="1"/>
</dbReference>
<dbReference type="PANTHER" id="PTHR46018:SF2">
    <property type="entry name" value="ZINC PHOSPHODIESTERASE ELAC PROTEIN 1"/>
    <property type="match status" value="1"/>
</dbReference>
<dbReference type="Pfam" id="PF00753">
    <property type="entry name" value="Lactamase_B"/>
    <property type="match status" value="1"/>
</dbReference>
<dbReference type="Pfam" id="PF12706">
    <property type="entry name" value="Lactamase_B_2"/>
    <property type="match status" value="1"/>
</dbReference>
<dbReference type="SUPFAM" id="SSF56281">
    <property type="entry name" value="Metallo-hydrolase/oxidoreductase"/>
    <property type="match status" value="1"/>
</dbReference>
<keyword id="KW-0255">Endonuclease</keyword>
<keyword id="KW-0378">Hydrolase</keyword>
<keyword id="KW-0479">Metal-binding</keyword>
<keyword id="KW-0540">Nuclease</keyword>
<keyword id="KW-0819">tRNA processing</keyword>
<keyword id="KW-0862">Zinc</keyword>
<gene>
    <name evidence="1" type="primary">rnz</name>
    <name type="ordered locus">YN1551_1677</name>
</gene>
<comment type="function">
    <text evidence="1">Zinc phosphodiesterase, which displays some tRNA 3'-processing endonuclease activity. Probably involved in tRNA maturation, by removing a 3'-trailer from precursor tRNA.</text>
</comment>
<comment type="catalytic activity">
    <reaction evidence="1">
        <text>Endonucleolytic cleavage of RNA, removing extra 3' nucleotides from tRNA precursor, generating 3' termini of tRNAs. A 3'-hydroxy group is left at the tRNA terminus and a 5'-phosphoryl group is left at the trailer molecule.</text>
        <dbReference type="EC" id="3.1.26.11"/>
    </reaction>
</comment>
<comment type="cofactor">
    <cofactor evidence="1">
        <name>Zn(2+)</name>
        <dbReference type="ChEBI" id="CHEBI:29105"/>
    </cofactor>
    <text evidence="1">Binds 2 Zn(2+) ions.</text>
</comment>
<comment type="subunit">
    <text evidence="1">Homodimer.</text>
</comment>
<comment type="similarity">
    <text evidence="1">Belongs to the RNase Z family.</text>
</comment>
<sequence>MIQIFFLGTGAGSPSKKRKLPAFLVRREGLNILLDCGEGTQYTLMNNKLGINSIKIIGITHMHGDHVFGLLGVIASMGLLDRKETLYILGPRDLKDFLYTSFEYSKFNPSFKIEFIDNYNDQNITIATFKTCHTVESQGYLISERDRVKIDEEKLEKEKIKDWRVMRKLKEGKTVEYNGKFLKPEDYLVIKRGLKVAYTGDTIPCQSVIESVKGVDLLIHDSTFLNEPSAFTYGHSNVADAAKVALEASVKLLALTHISPRYEDVTEHLKVARRIFPKSILPDDLSYITLK</sequence>